<sequence length="356" mass="37914">MAIDENKQKALAAALGQIEKQFGKGSIMRLGEDRSMDVETISTGSLSLDIALGAGGLPMGRIVEIYGPESSGKTTLTLQVIAAAQREGKTCAFIDAEHALDPIYAKKLGVDIDNLLCSQPDTGEQALEICDALTRSGAVDVIIVDSVAALTPKAEIEGEIGDSHMGLAARMMSQAMRKLAGNLKNANTLLIFINQIRMKIGVMFGNPETTTGGNALKFYASVRLDIRRIGAVKDGDVVVGSETRVKVVKNKIAAPFKQAEFQILYGEGININGELVDLGVKHKLIEKAGAWYSYNGDKIGQGKANASNYLKENPAIAAELDKKLREMLLNGGNGEQPVAAATAEFADGVDETNEEF</sequence>
<name>RECA_YERP3</name>
<keyword id="KW-0067">ATP-binding</keyword>
<keyword id="KW-0963">Cytoplasm</keyword>
<keyword id="KW-0227">DNA damage</keyword>
<keyword id="KW-0233">DNA recombination</keyword>
<keyword id="KW-0234">DNA repair</keyword>
<keyword id="KW-0238">DNA-binding</keyword>
<keyword id="KW-0547">Nucleotide-binding</keyword>
<keyword id="KW-0742">SOS response</keyword>
<organism>
    <name type="scientific">Yersinia pseudotuberculosis serotype O:1b (strain IP 31758)</name>
    <dbReference type="NCBI Taxonomy" id="349747"/>
    <lineage>
        <taxon>Bacteria</taxon>
        <taxon>Pseudomonadati</taxon>
        <taxon>Pseudomonadota</taxon>
        <taxon>Gammaproteobacteria</taxon>
        <taxon>Enterobacterales</taxon>
        <taxon>Yersiniaceae</taxon>
        <taxon>Yersinia</taxon>
    </lineage>
</organism>
<accession>A7FLR9</accession>
<reference key="1">
    <citation type="journal article" date="2007" name="PLoS Genet.">
        <title>The complete genome sequence of Yersinia pseudotuberculosis IP31758, the causative agent of Far East scarlet-like fever.</title>
        <authorList>
            <person name="Eppinger M."/>
            <person name="Rosovitz M.J."/>
            <person name="Fricke W.F."/>
            <person name="Rasko D.A."/>
            <person name="Kokorina G."/>
            <person name="Fayolle C."/>
            <person name="Lindler L.E."/>
            <person name="Carniel E."/>
            <person name="Ravel J."/>
        </authorList>
    </citation>
    <scope>NUCLEOTIDE SEQUENCE [LARGE SCALE GENOMIC DNA]</scope>
    <source>
        <strain>IP 31758</strain>
    </source>
</reference>
<dbReference type="EMBL" id="CP000720">
    <property type="protein sequence ID" value="ABS46048.1"/>
    <property type="molecule type" value="Genomic_DNA"/>
</dbReference>
<dbReference type="RefSeq" id="WP_011191806.1">
    <property type="nucleotide sequence ID" value="NC_009708.1"/>
</dbReference>
<dbReference type="SMR" id="A7FLR9"/>
<dbReference type="GeneID" id="49787170"/>
<dbReference type="KEGG" id="ypi:YpsIP31758_3240"/>
<dbReference type="HOGENOM" id="CLU_040469_3_2_6"/>
<dbReference type="Proteomes" id="UP000002412">
    <property type="component" value="Chromosome"/>
</dbReference>
<dbReference type="GO" id="GO:0005829">
    <property type="term" value="C:cytosol"/>
    <property type="evidence" value="ECO:0007669"/>
    <property type="project" value="TreeGrafter"/>
</dbReference>
<dbReference type="GO" id="GO:0005524">
    <property type="term" value="F:ATP binding"/>
    <property type="evidence" value="ECO:0007669"/>
    <property type="project" value="UniProtKB-UniRule"/>
</dbReference>
<dbReference type="GO" id="GO:0016887">
    <property type="term" value="F:ATP hydrolysis activity"/>
    <property type="evidence" value="ECO:0007669"/>
    <property type="project" value="InterPro"/>
</dbReference>
<dbReference type="GO" id="GO:0140664">
    <property type="term" value="F:ATP-dependent DNA damage sensor activity"/>
    <property type="evidence" value="ECO:0007669"/>
    <property type="project" value="InterPro"/>
</dbReference>
<dbReference type="GO" id="GO:0003684">
    <property type="term" value="F:damaged DNA binding"/>
    <property type="evidence" value="ECO:0007669"/>
    <property type="project" value="UniProtKB-UniRule"/>
</dbReference>
<dbReference type="GO" id="GO:0003697">
    <property type="term" value="F:single-stranded DNA binding"/>
    <property type="evidence" value="ECO:0007669"/>
    <property type="project" value="UniProtKB-UniRule"/>
</dbReference>
<dbReference type="GO" id="GO:0006310">
    <property type="term" value="P:DNA recombination"/>
    <property type="evidence" value="ECO:0007669"/>
    <property type="project" value="UniProtKB-UniRule"/>
</dbReference>
<dbReference type="GO" id="GO:0006281">
    <property type="term" value="P:DNA repair"/>
    <property type="evidence" value="ECO:0007669"/>
    <property type="project" value="UniProtKB-UniRule"/>
</dbReference>
<dbReference type="GO" id="GO:0009432">
    <property type="term" value="P:SOS response"/>
    <property type="evidence" value="ECO:0007669"/>
    <property type="project" value="UniProtKB-UniRule"/>
</dbReference>
<dbReference type="CDD" id="cd00983">
    <property type="entry name" value="RecA"/>
    <property type="match status" value="1"/>
</dbReference>
<dbReference type="FunFam" id="3.40.50.300:FF:000087">
    <property type="entry name" value="Recombinase RecA"/>
    <property type="match status" value="1"/>
</dbReference>
<dbReference type="Gene3D" id="3.40.50.300">
    <property type="entry name" value="P-loop containing nucleotide triphosphate hydrolases"/>
    <property type="match status" value="1"/>
</dbReference>
<dbReference type="HAMAP" id="MF_00268">
    <property type="entry name" value="RecA"/>
    <property type="match status" value="1"/>
</dbReference>
<dbReference type="InterPro" id="IPR003593">
    <property type="entry name" value="AAA+_ATPase"/>
</dbReference>
<dbReference type="InterPro" id="IPR013765">
    <property type="entry name" value="DNA_recomb/repair_RecA"/>
</dbReference>
<dbReference type="InterPro" id="IPR020584">
    <property type="entry name" value="DNA_recomb/repair_RecA_CS"/>
</dbReference>
<dbReference type="InterPro" id="IPR027417">
    <property type="entry name" value="P-loop_NTPase"/>
</dbReference>
<dbReference type="InterPro" id="IPR049261">
    <property type="entry name" value="RecA-like_C"/>
</dbReference>
<dbReference type="InterPro" id="IPR049428">
    <property type="entry name" value="RecA-like_N"/>
</dbReference>
<dbReference type="InterPro" id="IPR020588">
    <property type="entry name" value="RecA_ATP-bd"/>
</dbReference>
<dbReference type="InterPro" id="IPR023400">
    <property type="entry name" value="RecA_C_sf"/>
</dbReference>
<dbReference type="InterPro" id="IPR020587">
    <property type="entry name" value="RecA_monomer-monomer_interface"/>
</dbReference>
<dbReference type="NCBIfam" id="TIGR02012">
    <property type="entry name" value="tigrfam_recA"/>
    <property type="match status" value="1"/>
</dbReference>
<dbReference type="PANTHER" id="PTHR45900:SF1">
    <property type="entry name" value="MITOCHONDRIAL DNA REPAIR PROTEIN RECA HOMOLOG-RELATED"/>
    <property type="match status" value="1"/>
</dbReference>
<dbReference type="PANTHER" id="PTHR45900">
    <property type="entry name" value="RECA"/>
    <property type="match status" value="1"/>
</dbReference>
<dbReference type="Pfam" id="PF00154">
    <property type="entry name" value="RecA"/>
    <property type="match status" value="1"/>
</dbReference>
<dbReference type="Pfam" id="PF21096">
    <property type="entry name" value="RecA_C"/>
    <property type="match status" value="1"/>
</dbReference>
<dbReference type="PRINTS" id="PR00142">
    <property type="entry name" value="RECA"/>
</dbReference>
<dbReference type="SMART" id="SM00382">
    <property type="entry name" value="AAA"/>
    <property type="match status" value="1"/>
</dbReference>
<dbReference type="SUPFAM" id="SSF52540">
    <property type="entry name" value="P-loop containing nucleoside triphosphate hydrolases"/>
    <property type="match status" value="1"/>
</dbReference>
<dbReference type="SUPFAM" id="SSF54752">
    <property type="entry name" value="RecA protein, C-terminal domain"/>
    <property type="match status" value="1"/>
</dbReference>
<dbReference type="PROSITE" id="PS00321">
    <property type="entry name" value="RECA_1"/>
    <property type="match status" value="1"/>
</dbReference>
<dbReference type="PROSITE" id="PS50162">
    <property type="entry name" value="RECA_2"/>
    <property type="match status" value="1"/>
</dbReference>
<dbReference type="PROSITE" id="PS50163">
    <property type="entry name" value="RECA_3"/>
    <property type="match status" value="1"/>
</dbReference>
<feature type="chain" id="PRO_1000059134" description="Protein RecA">
    <location>
        <begin position="1"/>
        <end position="356"/>
    </location>
</feature>
<feature type="binding site" evidence="1">
    <location>
        <begin position="67"/>
        <end position="74"/>
    </location>
    <ligand>
        <name>ATP</name>
        <dbReference type="ChEBI" id="CHEBI:30616"/>
    </ligand>
</feature>
<proteinExistence type="inferred from homology"/>
<evidence type="ECO:0000255" key="1">
    <source>
        <dbReference type="HAMAP-Rule" id="MF_00268"/>
    </source>
</evidence>
<comment type="function">
    <text evidence="1">Can catalyze the hydrolysis of ATP in the presence of single-stranded DNA, the ATP-dependent uptake of single-stranded DNA by duplex DNA, and the ATP-dependent hybridization of homologous single-stranded DNAs. It interacts with LexA causing its activation and leading to its autocatalytic cleavage.</text>
</comment>
<comment type="subcellular location">
    <subcellularLocation>
        <location evidence="1">Cytoplasm</location>
    </subcellularLocation>
</comment>
<comment type="similarity">
    <text evidence="1">Belongs to the RecA family.</text>
</comment>
<protein>
    <recommendedName>
        <fullName evidence="1">Protein RecA</fullName>
    </recommendedName>
    <alternativeName>
        <fullName evidence="1">Recombinase A</fullName>
    </alternativeName>
</protein>
<gene>
    <name evidence="1" type="primary">recA</name>
    <name type="ordered locus">YpsIP31758_3240</name>
</gene>